<gene>
    <name type="ordered locus">ken-037</name>
</gene>
<organism>
    <name type="scientific">African swine fever virus (isolate Pig/Kenya/KEN-50/1950)</name>
    <name type="common">ASFV</name>
    <dbReference type="NCBI Taxonomy" id="561445"/>
    <lineage>
        <taxon>Viruses</taxon>
        <taxon>Varidnaviria</taxon>
        <taxon>Bamfordvirae</taxon>
        <taxon>Nucleocytoviricota</taxon>
        <taxon>Pokkesviricetes</taxon>
        <taxon>Asfuvirales</taxon>
        <taxon>Asfarviridae</taxon>
        <taxon>Asfivirus</taxon>
        <taxon>African swine fever virus</taxon>
    </lineage>
</organism>
<reference key="1">
    <citation type="submission" date="2003-03" db="EMBL/GenBank/DDBJ databases">
        <title>African swine fever virus genomes.</title>
        <authorList>
            <person name="Kutish G.F."/>
            <person name="Rock D.L."/>
        </authorList>
    </citation>
    <scope>NUCLEOTIDE SEQUENCE [LARGE SCALE GENOMIC DNA]</scope>
</reference>
<sequence length="353" mass="40832">MSSPLSLQTLVKKTVASTSCLSIDEHILKYCGLWWHDAPLKLYIDRGRIYIKSGFLGEDIDLCVALIIAVKENNYSLIKLFTEWGAYINYSLLSINTKHARDLCRQLGAKETLDDYDIFCIFNKIMHNKTSGSIILCHEIFINNPKLENNFAAQLRRLIYKRLCGLIEIKETDELSELLVKYWYANAVQYDHKDAICFLDEKYTDLDEWRLKCYLCYNKIYELHDIYHKKKIQIDVNEMLSLACIRDNNLLTIYYCYALGGNINQAMLTSVQYYNIGNIYFCIDLGGNAFEEGSAIARQNGYNFLCHSLILNIYSSDASLPLNLKVPEEISSLLKNYKSKNLSIILDYSHKIL</sequence>
<evidence type="ECO:0000250" key="1"/>
<evidence type="ECO:0000305" key="2"/>
<comment type="function">
    <text evidence="1">Plays a role in virus cell tropism, and may be required for efficient virus replication in macrophages.</text>
</comment>
<comment type="similarity">
    <text evidence="2">Belongs to the asfivirus MGF 360 family.</text>
</comment>
<feature type="chain" id="PRO_0000373285" description="Protein MGF 360-13L">
    <location>
        <begin position="1"/>
        <end position="353"/>
    </location>
</feature>
<dbReference type="EMBL" id="AY261360">
    <property type="status" value="NOT_ANNOTATED_CDS"/>
    <property type="molecule type" value="Genomic_DNA"/>
</dbReference>
<dbReference type="SMR" id="P0C9Q3"/>
<dbReference type="Proteomes" id="UP000000861">
    <property type="component" value="Segment"/>
</dbReference>
<dbReference type="GO" id="GO:0042330">
    <property type="term" value="P:taxis"/>
    <property type="evidence" value="ECO:0007669"/>
    <property type="project" value="InterPro"/>
</dbReference>
<dbReference type="InterPro" id="IPR002595">
    <property type="entry name" value="ASFV_MGF360"/>
</dbReference>
<dbReference type="Pfam" id="PF01671">
    <property type="entry name" value="ASFV_360"/>
    <property type="match status" value="1"/>
</dbReference>
<accession>P0C9Q3</accession>
<protein>
    <recommendedName>
        <fullName>Protein MGF 360-13L</fullName>
    </recommendedName>
</protein>
<proteinExistence type="inferred from homology"/>
<name>36013_ASFK5</name>
<organismHost>
    <name type="scientific">Ornithodoros</name>
    <name type="common">relapsing fever ticks</name>
    <dbReference type="NCBI Taxonomy" id="6937"/>
</organismHost>
<organismHost>
    <name type="scientific">Phacochoerus aethiopicus</name>
    <name type="common">Warthog</name>
    <dbReference type="NCBI Taxonomy" id="85517"/>
</organismHost>
<organismHost>
    <name type="scientific">Phacochoerus africanus</name>
    <name type="common">Warthog</name>
    <dbReference type="NCBI Taxonomy" id="41426"/>
</organismHost>
<organismHost>
    <name type="scientific">Potamochoerus larvatus</name>
    <name type="common">Bushpig</name>
    <dbReference type="NCBI Taxonomy" id="273792"/>
</organismHost>
<organismHost>
    <name type="scientific">Sus scrofa</name>
    <name type="common">Pig</name>
    <dbReference type="NCBI Taxonomy" id="9823"/>
</organismHost>